<feature type="chain" id="PRO_0000054304" description="Glycogen debranching enzyme">
    <location>
        <begin position="1"/>
        <end position="662"/>
    </location>
</feature>
<feature type="active site" description="Nucleophile" evidence="1">
    <location>
        <position position="338"/>
    </location>
</feature>
<feature type="active site" description="Proton donor" evidence="1">
    <location>
        <position position="373"/>
    </location>
</feature>
<feature type="site" description="Transition state stabilizer" evidence="1">
    <location>
        <position position="445"/>
    </location>
</feature>
<accession>Q8ZA76</accession>
<accession>Q0WA76</accession>
<keyword id="KW-0119">Carbohydrate metabolism</keyword>
<keyword id="KW-0321">Glycogen metabolism</keyword>
<keyword id="KW-0326">Glycosidase</keyword>
<keyword id="KW-0378">Hydrolase</keyword>
<keyword id="KW-1185">Reference proteome</keyword>
<comment type="function">
    <text evidence="1">Removes maltotriose and maltotetraose chains that are attached by 1,6-alpha-linkage to the limit dextrin main chain, generating a debranched limit dextrin.</text>
</comment>
<comment type="catalytic activity">
    <reaction evidence="1">
        <text>Hydrolysis of (1-&gt;6)-alpha-D-glucosidic linkages to branches with degrees of polymerization of three or four glucose residues in limit dextrin.</text>
        <dbReference type="EC" id="3.2.1.196"/>
    </reaction>
</comment>
<comment type="pathway">
    <text evidence="1">Glycan degradation; glycogen degradation.</text>
</comment>
<comment type="similarity">
    <text evidence="1">Belongs to the glycosyl hydrolase 13 family.</text>
</comment>
<sequence>MAVLTHGSPTPSGAHFDGKGINFTLFSAHAEQVTLCLFDEQGQERQIAMPARTGDIWHGYLPGGKPGQRYGYRVSGPFEPSRGHRFNPHKLLIDPRTRALEGKVGDDPRFTGGVSQPDVRDSAAALPKCLVIHEEYDWQGDKPPAIPWGNTVIYEAHVRGLTQLHPDIPPELRGTYAALAHPALIEHLKTLGITTLELLPVQFHIDEPRLQKMGLSNYWGYNVLAPFAVDPDYASGREGISPLRELRDAVKALHNAGIEVILDVVFNHSAELDVFGPTLCQRGIDNASYYWLTPDGEYDNITGCGNALRLSHPYVTQWVIDCLNYWRDSCHVDGFRFDLGTVLGRTPAFDQHAPLFAALAADERLSACKLIAEPWDIGLGGYQLGNFPTGFSEWNDQYRDAMRGFWLRGEVPRGTFAQHFAASSRLFEQRGRLPSASINQITAHDGFTLLDLLCFNQKHNQMNGEENRDGSDNNHSNNFGCEGLVADAAIWQRRKACQRALLTTLLLSQGTPMLLAGDEQGHSQQGNNNAYCQNNILTWLDWGSADRALMTFTADLIRLRQQIPALTQDQWWQSGDSNVQWLDSQGQALSDAAWEQGCQQQLQILLSQRWLVLINATDHECEMHLPEGEWEGIPPFGVSDHAERLTTWRGSAHTICVLIKRD</sequence>
<name>GLGX_YERPE</name>
<gene>
    <name evidence="1" type="primary">glgX</name>
    <name type="ordered locus">YPO3941</name>
    <name type="ordered locus">y3887</name>
    <name type="ordered locus">YP_3303</name>
</gene>
<proteinExistence type="inferred from homology"/>
<reference key="1">
    <citation type="journal article" date="2001" name="Nature">
        <title>Genome sequence of Yersinia pestis, the causative agent of plague.</title>
        <authorList>
            <person name="Parkhill J."/>
            <person name="Wren B.W."/>
            <person name="Thomson N.R."/>
            <person name="Titball R.W."/>
            <person name="Holden M.T.G."/>
            <person name="Prentice M.B."/>
            <person name="Sebaihia M."/>
            <person name="James K.D."/>
            <person name="Churcher C.M."/>
            <person name="Mungall K.L."/>
            <person name="Baker S."/>
            <person name="Basham D."/>
            <person name="Bentley S.D."/>
            <person name="Brooks K."/>
            <person name="Cerdeno-Tarraga A.-M."/>
            <person name="Chillingworth T."/>
            <person name="Cronin A."/>
            <person name="Davies R.M."/>
            <person name="Davis P."/>
            <person name="Dougan G."/>
            <person name="Feltwell T."/>
            <person name="Hamlin N."/>
            <person name="Holroyd S."/>
            <person name="Jagels K."/>
            <person name="Karlyshev A.V."/>
            <person name="Leather S."/>
            <person name="Moule S."/>
            <person name="Oyston P.C.F."/>
            <person name="Quail M.A."/>
            <person name="Rutherford K.M."/>
            <person name="Simmonds M."/>
            <person name="Skelton J."/>
            <person name="Stevens K."/>
            <person name="Whitehead S."/>
            <person name="Barrell B.G."/>
        </authorList>
    </citation>
    <scope>NUCLEOTIDE SEQUENCE [LARGE SCALE GENOMIC DNA]</scope>
    <source>
        <strain>CO-92 / Biovar Orientalis</strain>
    </source>
</reference>
<reference key="2">
    <citation type="journal article" date="2002" name="J. Bacteriol.">
        <title>Genome sequence of Yersinia pestis KIM.</title>
        <authorList>
            <person name="Deng W."/>
            <person name="Burland V."/>
            <person name="Plunkett G. III"/>
            <person name="Boutin A."/>
            <person name="Mayhew G.F."/>
            <person name="Liss P."/>
            <person name="Perna N.T."/>
            <person name="Rose D.J."/>
            <person name="Mau B."/>
            <person name="Zhou S."/>
            <person name="Schwartz D.C."/>
            <person name="Fetherston J.D."/>
            <person name="Lindler L.E."/>
            <person name="Brubaker R.R."/>
            <person name="Plano G.V."/>
            <person name="Straley S.C."/>
            <person name="McDonough K.A."/>
            <person name="Nilles M.L."/>
            <person name="Matson J.S."/>
            <person name="Blattner F.R."/>
            <person name="Perry R.D."/>
        </authorList>
    </citation>
    <scope>NUCLEOTIDE SEQUENCE [LARGE SCALE GENOMIC DNA]</scope>
    <source>
        <strain>KIM10+ / Biovar Mediaevalis</strain>
    </source>
</reference>
<reference key="3">
    <citation type="journal article" date="2004" name="DNA Res.">
        <title>Complete genome sequence of Yersinia pestis strain 91001, an isolate avirulent to humans.</title>
        <authorList>
            <person name="Song Y."/>
            <person name="Tong Z."/>
            <person name="Wang J."/>
            <person name="Wang L."/>
            <person name="Guo Z."/>
            <person name="Han Y."/>
            <person name="Zhang J."/>
            <person name="Pei D."/>
            <person name="Zhou D."/>
            <person name="Qin H."/>
            <person name="Pang X."/>
            <person name="Han Y."/>
            <person name="Zhai J."/>
            <person name="Li M."/>
            <person name="Cui B."/>
            <person name="Qi Z."/>
            <person name="Jin L."/>
            <person name="Dai R."/>
            <person name="Chen F."/>
            <person name="Li S."/>
            <person name="Ye C."/>
            <person name="Du Z."/>
            <person name="Lin W."/>
            <person name="Wang J."/>
            <person name="Yu J."/>
            <person name="Yang H."/>
            <person name="Wang J."/>
            <person name="Huang P."/>
            <person name="Yang R."/>
        </authorList>
    </citation>
    <scope>NUCLEOTIDE SEQUENCE [LARGE SCALE GENOMIC DNA]</scope>
    <source>
        <strain>91001 / Biovar Mediaevalis</strain>
    </source>
</reference>
<dbReference type="EC" id="3.2.1.196" evidence="1"/>
<dbReference type="EMBL" id="AL590842">
    <property type="protein sequence ID" value="CAL22522.1"/>
    <property type="molecule type" value="Genomic_DNA"/>
</dbReference>
<dbReference type="EMBL" id="AE009952">
    <property type="protein sequence ID" value="AAM87432.1"/>
    <property type="molecule type" value="Genomic_DNA"/>
</dbReference>
<dbReference type="EMBL" id="AE017042">
    <property type="protein sequence ID" value="AAS63468.1"/>
    <property type="molecule type" value="Genomic_DNA"/>
</dbReference>
<dbReference type="PIR" id="AG0479">
    <property type="entry name" value="AG0479"/>
</dbReference>
<dbReference type="RefSeq" id="WP_002209499.1">
    <property type="nucleotide sequence ID" value="NZ_WUCM01000085.1"/>
</dbReference>
<dbReference type="RefSeq" id="YP_002348812.1">
    <property type="nucleotide sequence ID" value="NC_003143.1"/>
</dbReference>
<dbReference type="SMR" id="Q8ZA76"/>
<dbReference type="IntAct" id="Q8ZA76">
    <property type="interactions" value="15"/>
</dbReference>
<dbReference type="STRING" id="214092.YPO3941"/>
<dbReference type="CAZy" id="CBM48">
    <property type="family name" value="Carbohydrate-Binding Module Family 48"/>
</dbReference>
<dbReference type="CAZy" id="GH13">
    <property type="family name" value="Glycoside Hydrolase Family 13"/>
</dbReference>
<dbReference type="PaxDb" id="214092-YPO3941"/>
<dbReference type="DNASU" id="1148834"/>
<dbReference type="EnsemblBacteria" id="AAS63468">
    <property type="protein sequence ID" value="AAS63468"/>
    <property type="gene ID" value="YP_3303"/>
</dbReference>
<dbReference type="GeneID" id="57974763"/>
<dbReference type="KEGG" id="ype:YPO3941"/>
<dbReference type="KEGG" id="ypk:y3887"/>
<dbReference type="KEGG" id="ypm:YP_3303"/>
<dbReference type="PATRIC" id="fig|214092.21.peg.4467"/>
<dbReference type="eggNOG" id="COG1523">
    <property type="taxonomic scope" value="Bacteria"/>
</dbReference>
<dbReference type="HOGENOM" id="CLU_011725_1_1_6"/>
<dbReference type="OMA" id="INHFQWG"/>
<dbReference type="OrthoDB" id="3236218at2"/>
<dbReference type="UniPathway" id="UPA00165"/>
<dbReference type="Proteomes" id="UP000000815">
    <property type="component" value="Chromosome"/>
</dbReference>
<dbReference type="Proteomes" id="UP000001019">
    <property type="component" value="Chromosome"/>
</dbReference>
<dbReference type="Proteomes" id="UP000002490">
    <property type="component" value="Chromosome"/>
</dbReference>
<dbReference type="GO" id="GO:0004133">
    <property type="term" value="F:glycogen debranching enzyme activity"/>
    <property type="evidence" value="ECO:0007669"/>
    <property type="project" value="UniProtKB-UniRule"/>
</dbReference>
<dbReference type="GO" id="GO:0004553">
    <property type="term" value="F:hydrolase activity, hydrolyzing O-glycosyl compounds"/>
    <property type="evidence" value="ECO:0007669"/>
    <property type="project" value="InterPro"/>
</dbReference>
<dbReference type="GO" id="GO:0005980">
    <property type="term" value="P:glycogen catabolic process"/>
    <property type="evidence" value="ECO:0007669"/>
    <property type="project" value="UniProtKB-UniRule"/>
</dbReference>
<dbReference type="CDD" id="cd11326">
    <property type="entry name" value="AmyAc_Glg_debranch"/>
    <property type="match status" value="1"/>
</dbReference>
<dbReference type="CDD" id="cd02856">
    <property type="entry name" value="E_set_GDE_Isoamylase_N"/>
    <property type="match status" value="1"/>
</dbReference>
<dbReference type="Gene3D" id="3.20.20.80">
    <property type="entry name" value="Glycosidases"/>
    <property type="match status" value="1"/>
</dbReference>
<dbReference type="Gene3D" id="2.60.40.1180">
    <property type="entry name" value="Golgi alpha-mannosidase II"/>
    <property type="match status" value="1"/>
</dbReference>
<dbReference type="Gene3D" id="2.60.40.10">
    <property type="entry name" value="Immunoglobulins"/>
    <property type="match status" value="1"/>
</dbReference>
<dbReference type="HAMAP" id="MF_01248">
    <property type="entry name" value="GlgX"/>
    <property type="match status" value="1"/>
</dbReference>
<dbReference type="InterPro" id="IPR040784">
    <property type="entry name" value="GlgX_C"/>
</dbReference>
<dbReference type="InterPro" id="IPR044505">
    <property type="entry name" value="GlgX_Isoamylase_N_E_set"/>
</dbReference>
<dbReference type="InterPro" id="IPR006047">
    <property type="entry name" value="Glyco_hydro_13_cat_dom"/>
</dbReference>
<dbReference type="InterPro" id="IPR004193">
    <property type="entry name" value="Glyco_hydro_13_N"/>
</dbReference>
<dbReference type="InterPro" id="IPR013780">
    <property type="entry name" value="Glyco_hydro_b"/>
</dbReference>
<dbReference type="InterPro" id="IPR022844">
    <property type="entry name" value="Glycogen_debranch_bac"/>
</dbReference>
<dbReference type="InterPro" id="IPR011837">
    <property type="entry name" value="Glycogen_debranch_GlgX"/>
</dbReference>
<dbReference type="InterPro" id="IPR017853">
    <property type="entry name" value="Glycoside_hydrolase_SF"/>
</dbReference>
<dbReference type="InterPro" id="IPR013783">
    <property type="entry name" value="Ig-like_fold"/>
</dbReference>
<dbReference type="InterPro" id="IPR014756">
    <property type="entry name" value="Ig_E-set"/>
</dbReference>
<dbReference type="NCBIfam" id="TIGR02100">
    <property type="entry name" value="glgX_debranch"/>
    <property type="match status" value="1"/>
</dbReference>
<dbReference type="NCBIfam" id="NF002983">
    <property type="entry name" value="PRK03705.1"/>
    <property type="match status" value="1"/>
</dbReference>
<dbReference type="PANTHER" id="PTHR43002">
    <property type="entry name" value="GLYCOGEN DEBRANCHING ENZYME"/>
    <property type="match status" value="1"/>
</dbReference>
<dbReference type="Pfam" id="PF02922">
    <property type="entry name" value="CBM_48"/>
    <property type="match status" value="1"/>
</dbReference>
<dbReference type="Pfam" id="PF18390">
    <property type="entry name" value="GlgX_C"/>
    <property type="match status" value="1"/>
</dbReference>
<dbReference type="SMART" id="SM00642">
    <property type="entry name" value="Aamy"/>
    <property type="match status" value="1"/>
</dbReference>
<dbReference type="SUPFAM" id="SSF51445">
    <property type="entry name" value="(Trans)glycosidases"/>
    <property type="match status" value="1"/>
</dbReference>
<dbReference type="SUPFAM" id="SSF81296">
    <property type="entry name" value="E set domains"/>
    <property type="match status" value="1"/>
</dbReference>
<dbReference type="SUPFAM" id="SSF51011">
    <property type="entry name" value="Glycosyl hydrolase domain"/>
    <property type="match status" value="1"/>
</dbReference>
<protein>
    <recommendedName>
        <fullName evidence="1">Glycogen debranching enzyme</fullName>
        <ecNumber evidence="1">3.2.1.196</ecNumber>
    </recommendedName>
    <alternativeName>
        <fullName evidence="1">Limit dextrin alpha-1,6-maltotetraose-hydrolase</fullName>
    </alternativeName>
</protein>
<organism>
    <name type="scientific">Yersinia pestis</name>
    <dbReference type="NCBI Taxonomy" id="632"/>
    <lineage>
        <taxon>Bacteria</taxon>
        <taxon>Pseudomonadati</taxon>
        <taxon>Pseudomonadota</taxon>
        <taxon>Gammaproteobacteria</taxon>
        <taxon>Enterobacterales</taxon>
        <taxon>Yersiniaceae</taxon>
        <taxon>Yersinia</taxon>
    </lineage>
</organism>
<evidence type="ECO:0000255" key="1">
    <source>
        <dbReference type="HAMAP-Rule" id="MF_01248"/>
    </source>
</evidence>